<dbReference type="EC" id="1.14.15.36" evidence="2"/>
<dbReference type="EMBL" id="LT708304">
    <property type="protein sequence ID" value="SIT99386.1"/>
    <property type="molecule type" value="Genomic_DNA"/>
</dbReference>
<dbReference type="RefSeq" id="NP_854445.1">
    <property type="nucleotide sequence ID" value="NC_002945.3"/>
</dbReference>
<dbReference type="RefSeq" id="WP_003898577.1">
    <property type="nucleotide sequence ID" value="NC_002945.4"/>
</dbReference>
<dbReference type="SMR" id="P0A513"/>
<dbReference type="KEGG" id="mbo:BQ2027_MB0787C"/>
<dbReference type="PATRIC" id="fig|233413.5.peg.857"/>
<dbReference type="Proteomes" id="UP000001419">
    <property type="component" value="Chromosome"/>
</dbReference>
<dbReference type="GO" id="GO:0005737">
    <property type="term" value="C:cytoplasm"/>
    <property type="evidence" value="ECO:0007669"/>
    <property type="project" value="UniProtKB-SubCell"/>
</dbReference>
<dbReference type="GO" id="GO:0020037">
    <property type="term" value="F:heme binding"/>
    <property type="evidence" value="ECO:0007669"/>
    <property type="project" value="InterPro"/>
</dbReference>
<dbReference type="GO" id="GO:0005506">
    <property type="term" value="F:iron ion binding"/>
    <property type="evidence" value="ECO:0007669"/>
    <property type="project" value="InterPro"/>
</dbReference>
<dbReference type="GO" id="GO:0008398">
    <property type="term" value="F:sterol 14-demethylase activity"/>
    <property type="evidence" value="ECO:0007669"/>
    <property type="project" value="UniProtKB-EC"/>
</dbReference>
<dbReference type="GO" id="GO:0016126">
    <property type="term" value="P:sterol biosynthetic process"/>
    <property type="evidence" value="ECO:0007669"/>
    <property type="project" value="UniProtKB-KW"/>
</dbReference>
<dbReference type="CDD" id="cd11042">
    <property type="entry name" value="CYP51-like"/>
    <property type="match status" value="1"/>
</dbReference>
<dbReference type="FunFam" id="1.10.630.10:FF:000120">
    <property type="entry name" value="Lanosterol 14-alpha demethylase"/>
    <property type="match status" value="1"/>
</dbReference>
<dbReference type="Gene3D" id="1.10.630.10">
    <property type="entry name" value="Cytochrome P450"/>
    <property type="match status" value="1"/>
</dbReference>
<dbReference type="InterPro" id="IPR050529">
    <property type="entry name" value="CYP450_sterol_14alpha_dmase"/>
</dbReference>
<dbReference type="InterPro" id="IPR001128">
    <property type="entry name" value="Cyt_P450"/>
</dbReference>
<dbReference type="InterPro" id="IPR017972">
    <property type="entry name" value="Cyt_P450_CS"/>
</dbReference>
<dbReference type="InterPro" id="IPR002403">
    <property type="entry name" value="Cyt_P450_E_grp-IV"/>
</dbReference>
<dbReference type="InterPro" id="IPR036396">
    <property type="entry name" value="Cyt_P450_sf"/>
</dbReference>
<dbReference type="PANTHER" id="PTHR24304:SF2">
    <property type="entry name" value="24-HYDROXYCHOLESTEROL 7-ALPHA-HYDROXYLASE"/>
    <property type="match status" value="1"/>
</dbReference>
<dbReference type="PANTHER" id="PTHR24304">
    <property type="entry name" value="CYTOCHROME P450 FAMILY 7"/>
    <property type="match status" value="1"/>
</dbReference>
<dbReference type="Pfam" id="PF00067">
    <property type="entry name" value="p450"/>
    <property type="match status" value="1"/>
</dbReference>
<dbReference type="PRINTS" id="PR00465">
    <property type="entry name" value="EP450IV"/>
</dbReference>
<dbReference type="PRINTS" id="PR00385">
    <property type="entry name" value="P450"/>
</dbReference>
<dbReference type="SUPFAM" id="SSF48264">
    <property type="entry name" value="Cytochrome P450"/>
    <property type="match status" value="1"/>
</dbReference>
<dbReference type="PROSITE" id="PS00086">
    <property type="entry name" value="CYTOCHROME_P450"/>
    <property type="match status" value="1"/>
</dbReference>
<gene>
    <name type="primary">cyp51</name>
    <name type="ordered locus">BQ2027_MB0787C</name>
</gene>
<name>CP51_MYCBO</name>
<comment type="function">
    <text evidence="2">Sterol 14alpha-demethylase whose physiological substrate is not known. Accepts electrons from the iron-sulfur ferredoxin Fdx encoded by an adjacent gene. In vitro, catalyzes C14-demethylation of lanosterol, 24,25-dihydrolanosterol and obtusifoliol, to produce the 8,14-dienes stereoselectively.</text>
</comment>
<comment type="catalytic activity">
    <reaction evidence="2">
        <text>a 14alpha-methyl steroid + 6 reduced [2Fe-2S]-[ferredoxin] + 3 O2 + 5 H(+) = a Delta(14) steroid + formate + 6 oxidized [2Fe-2S]-[ferredoxin] + 4 H2O</text>
        <dbReference type="Rhea" id="RHEA:56752"/>
        <dbReference type="Rhea" id="RHEA-COMP:10000"/>
        <dbReference type="Rhea" id="RHEA-COMP:10001"/>
        <dbReference type="ChEBI" id="CHEBI:15377"/>
        <dbReference type="ChEBI" id="CHEBI:15378"/>
        <dbReference type="ChEBI" id="CHEBI:15379"/>
        <dbReference type="ChEBI" id="CHEBI:15740"/>
        <dbReference type="ChEBI" id="CHEBI:33737"/>
        <dbReference type="ChEBI" id="CHEBI:33738"/>
        <dbReference type="ChEBI" id="CHEBI:138029"/>
        <dbReference type="ChEBI" id="CHEBI:138031"/>
        <dbReference type="EC" id="1.14.15.36"/>
    </reaction>
</comment>
<comment type="cofactor">
    <cofactor evidence="2">
        <name>heme b</name>
        <dbReference type="ChEBI" id="CHEBI:60344"/>
    </cofactor>
</comment>
<comment type="subunit">
    <text evidence="1">Monomer.</text>
</comment>
<comment type="subcellular location">
    <subcellularLocation>
        <location evidence="1">Cytoplasm</location>
    </subcellularLocation>
</comment>
<comment type="similarity">
    <text evidence="3">Belongs to the cytochrome P450 family.</text>
</comment>
<proteinExistence type="inferred from homology"/>
<keyword id="KW-0963">Cytoplasm</keyword>
<keyword id="KW-0349">Heme</keyword>
<keyword id="KW-0408">Iron</keyword>
<keyword id="KW-0444">Lipid biosynthesis</keyword>
<keyword id="KW-0443">Lipid metabolism</keyword>
<keyword id="KW-0479">Metal-binding</keyword>
<keyword id="KW-0503">Monooxygenase</keyword>
<keyword id="KW-0560">Oxidoreductase</keyword>
<keyword id="KW-1185">Reference proteome</keyword>
<keyword id="KW-0752">Steroid biosynthesis</keyword>
<keyword id="KW-0753">Steroid metabolism</keyword>
<keyword id="KW-0756">Sterol biosynthesis</keyword>
<keyword id="KW-1207">Sterol metabolism</keyword>
<feature type="chain" id="PRO_0000052016" description="Sterol 14alpha-demethylase">
    <location>
        <begin position="1"/>
        <end position="451"/>
    </location>
</feature>
<feature type="binding site" evidence="2">
    <location>
        <position position="72"/>
    </location>
    <ligand>
        <name>heme b</name>
        <dbReference type="ChEBI" id="CHEBI:60344"/>
    </ligand>
</feature>
<feature type="binding site" evidence="2">
    <location>
        <position position="76"/>
    </location>
    <ligand>
        <name>heme b</name>
        <dbReference type="ChEBI" id="CHEBI:60344"/>
    </ligand>
</feature>
<feature type="binding site" evidence="2">
    <location>
        <position position="97"/>
    </location>
    <ligand>
        <name>heme b</name>
        <dbReference type="ChEBI" id="CHEBI:60344"/>
    </ligand>
</feature>
<feature type="binding site" evidence="2">
    <location>
        <position position="326"/>
    </location>
    <ligand>
        <name>heme b</name>
        <dbReference type="ChEBI" id="CHEBI:60344"/>
    </ligand>
</feature>
<feature type="binding site" evidence="2">
    <location>
        <position position="392"/>
    </location>
    <ligand>
        <name>heme b</name>
        <dbReference type="ChEBI" id="CHEBI:60344"/>
    </ligand>
</feature>
<feature type="binding site" description="axial binding residue" evidence="2">
    <location>
        <position position="394"/>
    </location>
    <ligand>
        <name>heme b</name>
        <dbReference type="ChEBI" id="CHEBI:60344"/>
    </ligand>
    <ligandPart>
        <name>Fe</name>
        <dbReference type="ChEBI" id="CHEBI:18248"/>
    </ligandPart>
</feature>
<protein>
    <recommendedName>
        <fullName>Sterol 14alpha-demethylase</fullName>
        <ecNumber evidence="2">1.14.15.36</ecNumber>
    </recommendedName>
    <alternativeName>
        <fullName>CYPLI</fullName>
    </alternativeName>
    <alternativeName>
        <fullName>Cytochrome P450 51</fullName>
    </alternativeName>
    <alternativeName>
        <fullName>Cytochrome P450-14DM</fullName>
    </alternativeName>
    <alternativeName>
        <fullName>Cytochrome P450-LIA1</fullName>
    </alternativeName>
    <alternativeName>
        <fullName>Sterol 14-alpha demethylase</fullName>
    </alternativeName>
</protein>
<accession>P0A513</accession>
<accession>A0A1R3XWC0</accession>
<accession>P77901</accession>
<accession>X2BFW1</accession>
<reference key="1">
    <citation type="journal article" date="2003" name="Proc. Natl. Acad. Sci. U.S.A.">
        <title>The complete genome sequence of Mycobacterium bovis.</title>
        <authorList>
            <person name="Garnier T."/>
            <person name="Eiglmeier K."/>
            <person name="Camus J.-C."/>
            <person name="Medina N."/>
            <person name="Mansoor H."/>
            <person name="Pryor M."/>
            <person name="Duthoy S."/>
            <person name="Grondin S."/>
            <person name="Lacroix C."/>
            <person name="Monsempe C."/>
            <person name="Simon S."/>
            <person name="Harris B."/>
            <person name="Atkin R."/>
            <person name="Doggett J."/>
            <person name="Mayes R."/>
            <person name="Keating L."/>
            <person name="Wheeler P.R."/>
            <person name="Parkhill J."/>
            <person name="Barrell B.G."/>
            <person name="Cole S.T."/>
            <person name="Gordon S.V."/>
            <person name="Hewinson R.G."/>
        </authorList>
    </citation>
    <scope>NUCLEOTIDE SEQUENCE [LARGE SCALE GENOMIC DNA]</scope>
    <source>
        <strain>ATCC BAA-935 / AF2122/97</strain>
    </source>
</reference>
<reference key="2">
    <citation type="journal article" date="2017" name="Genome Announc.">
        <title>Updated reference genome sequence and annotation of Mycobacterium bovis AF2122/97.</title>
        <authorList>
            <person name="Malone K.M."/>
            <person name="Farrell D."/>
            <person name="Stuber T.P."/>
            <person name="Schubert O.T."/>
            <person name="Aebersold R."/>
            <person name="Robbe-Austerman S."/>
            <person name="Gordon S.V."/>
        </authorList>
    </citation>
    <scope>NUCLEOTIDE SEQUENCE [LARGE SCALE GENOMIC DNA]</scope>
    <scope>GENOME REANNOTATION</scope>
    <source>
        <strain>ATCC BAA-935 / AF2122/97</strain>
    </source>
</reference>
<organism>
    <name type="scientific">Mycobacterium bovis (strain ATCC BAA-935 / AF2122/97)</name>
    <dbReference type="NCBI Taxonomy" id="233413"/>
    <lineage>
        <taxon>Bacteria</taxon>
        <taxon>Bacillati</taxon>
        <taxon>Actinomycetota</taxon>
        <taxon>Actinomycetes</taxon>
        <taxon>Mycobacteriales</taxon>
        <taxon>Mycobacteriaceae</taxon>
        <taxon>Mycobacterium</taxon>
        <taxon>Mycobacterium tuberculosis complex</taxon>
    </lineage>
</organism>
<evidence type="ECO:0000250" key="1"/>
<evidence type="ECO:0000250" key="2">
    <source>
        <dbReference type="UniProtKB" id="P9WPP9"/>
    </source>
</evidence>
<evidence type="ECO:0000305" key="3"/>
<sequence>MSAVALPRVSGGHDEHGHLEEFRTDPIGLMQRVRDECGDVGTFQLAGKQVVLLSGSHANEFFFRAGDDDLDQAKAYPFMTPIFGEGVVFDASPERRKEMLHNAALRGEQMKGHAATIEDQVRRMIADWGEAGEIDLLDFFAELTIYTSSACLIGKKFRDQLDGRFAKLYHELERGTDPLAYVDPYLPIESFRRRDEARNGLVALVADIMNGRIANPPTDKSDRDMLDVLIAVKAETGTPRFSADEITGMFISMMFAGHHTSSGTASWTLIELMRHRDAYAAVIDELDELYGDGRSVSFHALRQIPQLENVLKETLRLHPPLIILMRVAKGEFEVQGHRIHEGDLVAASPAISNRIPEDFPDPHDFVPARYEQPRQEDLLNRWTWIPFGAGRHRCVGAAFAIMQIKAIFSVLLREYEFEMAQPPESYRNDHSKMVVQLAQPACVRYRRRTGV</sequence>